<comment type="function">
    <text evidence="1">Part of the twin-arginine translocation (Tat) system that transports large folded proteins containing a characteristic twin-arginine motif in their signal peptide across membranes. TatA could form the protein-conducting channel of the Tat system.</text>
</comment>
<comment type="subunit">
    <text evidence="1">The Tat system comprises two distinct complexes: a TatABC complex, containing multiple copies of TatA, TatB and TatC subunits, and a separate TatA complex, containing only TatA subunits. Substrates initially bind to the TatABC complex, which probably triggers association of the separate TatA complex to form the active translocon.</text>
</comment>
<comment type="subcellular location">
    <subcellularLocation>
        <location evidence="1">Cell inner membrane</location>
        <topology evidence="1">Single-pass membrane protein</topology>
    </subcellularLocation>
</comment>
<comment type="similarity">
    <text evidence="1">Belongs to the TatA/E family.</text>
</comment>
<accession>Q9PFU3</accession>
<proteinExistence type="inferred from homology"/>
<name>TATA_XYLFA</name>
<keyword id="KW-0997">Cell inner membrane</keyword>
<keyword id="KW-1003">Cell membrane</keyword>
<keyword id="KW-0472">Membrane</keyword>
<keyword id="KW-0653">Protein transport</keyword>
<keyword id="KW-0811">Translocation</keyword>
<keyword id="KW-0812">Transmembrane</keyword>
<keyword id="KW-1133">Transmembrane helix</keyword>
<keyword id="KW-0813">Transport</keyword>
<dbReference type="EMBL" id="AE003849">
    <property type="protein sequence ID" value="AAF83374.1"/>
    <property type="molecule type" value="Genomic_DNA"/>
</dbReference>
<dbReference type="PIR" id="B82791">
    <property type="entry name" value="B82791"/>
</dbReference>
<dbReference type="RefSeq" id="WP_010893090.1">
    <property type="nucleotide sequence ID" value="NC_002488.3"/>
</dbReference>
<dbReference type="SMR" id="Q9PFU3"/>
<dbReference type="STRING" id="160492.XF_0564"/>
<dbReference type="KEGG" id="xfa:XF_0564"/>
<dbReference type="eggNOG" id="COG1826">
    <property type="taxonomic scope" value="Bacteria"/>
</dbReference>
<dbReference type="HOGENOM" id="CLU_086034_5_3_6"/>
<dbReference type="Proteomes" id="UP000000812">
    <property type="component" value="Chromosome"/>
</dbReference>
<dbReference type="GO" id="GO:0033281">
    <property type="term" value="C:TAT protein transport complex"/>
    <property type="evidence" value="ECO:0007669"/>
    <property type="project" value="UniProtKB-UniRule"/>
</dbReference>
<dbReference type="GO" id="GO:0008320">
    <property type="term" value="F:protein transmembrane transporter activity"/>
    <property type="evidence" value="ECO:0007669"/>
    <property type="project" value="UniProtKB-UniRule"/>
</dbReference>
<dbReference type="GO" id="GO:0043953">
    <property type="term" value="P:protein transport by the Tat complex"/>
    <property type="evidence" value="ECO:0007669"/>
    <property type="project" value="UniProtKB-UniRule"/>
</dbReference>
<dbReference type="Gene3D" id="1.20.5.3310">
    <property type="match status" value="1"/>
</dbReference>
<dbReference type="HAMAP" id="MF_00236">
    <property type="entry name" value="TatA_E"/>
    <property type="match status" value="1"/>
</dbReference>
<dbReference type="InterPro" id="IPR003369">
    <property type="entry name" value="TatA/B/E"/>
</dbReference>
<dbReference type="InterPro" id="IPR006312">
    <property type="entry name" value="TatA/E"/>
</dbReference>
<dbReference type="NCBIfam" id="NF003393">
    <property type="entry name" value="PRK04561.1"/>
    <property type="match status" value="1"/>
</dbReference>
<dbReference type="NCBIfam" id="TIGR01411">
    <property type="entry name" value="tatAE"/>
    <property type="match status" value="1"/>
</dbReference>
<dbReference type="PANTHER" id="PTHR42982">
    <property type="entry name" value="SEC-INDEPENDENT PROTEIN TRANSLOCASE PROTEIN TATA"/>
    <property type="match status" value="1"/>
</dbReference>
<dbReference type="PANTHER" id="PTHR42982:SF1">
    <property type="entry name" value="SEC-INDEPENDENT PROTEIN TRANSLOCASE PROTEIN TATA"/>
    <property type="match status" value="1"/>
</dbReference>
<dbReference type="Pfam" id="PF02416">
    <property type="entry name" value="TatA_B_E"/>
    <property type="match status" value="1"/>
</dbReference>
<reference key="1">
    <citation type="journal article" date="2000" name="Nature">
        <title>The genome sequence of the plant pathogen Xylella fastidiosa.</title>
        <authorList>
            <person name="Simpson A.J.G."/>
            <person name="Reinach F.C."/>
            <person name="Arruda P."/>
            <person name="Abreu F.A."/>
            <person name="Acencio M."/>
            <person name="Alvarenga R."/>
            <person name="Alves L.M.C."/>
            <person name="Araya J.E."/>
            <person name="Baia G.S."/>
            <person name="Baptista C.S."/>
            <person name="Barros M.H."/>
            <person name="Bonaccorsi E.D."/>
            <person name="Bordin S."/>
            <person name="Bove J.M."/>
            <person name="Briones M.R.S."/>
            <person name="Bueno M.R.P."/>
            <person name="Camargo A.A."/>
            <person name="Camargo L.E.A."/>
            <person name="Carraro D.M."/>
            <person name="Carrer H."/>
            <person name="Colauto N.B."/>
            <person name="Colombo C."/>
            <person name="Costa F.F."/>
            <person name="Costa M.C.R."/>
            <person name="Costa-Neto C.M."/>
            <person name="Coutinho L.L."/>
            <person name="Cristofani M."/>
            <person name="Dias-Neto E."/>
            <person name="Docena C."/>
            <person name="El-Dorry H."/>
            <person name="Facincani A.P."/>
            <person name="Ferreira A.J.S."/>
            <person name="Ferreira V.C.A."/>
            <person name="Ferro J.A."/>
            <person name="Fraga J.S."/>
            <person name="Franca S.C."/>
            <person name="Franco M.C."/>
            <person name="Frohme M."/>
            <person name="Furlan L.R."/>
            <person name="Garnier M."/>
            <person name="Goldman G.H."/>
            <person name="Goldman M.H.S."/>
            <person name="Gomes S.L."/>
            <person name="Gruber A."/>
            <person name="Ho P.L."/>
            <person name="Hoheisel J.D."/>
            <person name="Junqueira M.L."/>
            <person name="Kemper E.L."/>
            <person name="Kitajima J.P."/>
            <person name="Krieger J.E."/>
            <person name="Kuramae E.E."/>
            <person name="Laigret F."/>
            <person name="Lambais M.R."/>
            <person name="Leite L.C.C."/>
            <person name="Lemos E.G.M."/>
            <person name="Lemos M.V.F."/>
            <person name="Lopes S.A."/>
            <person name="Lopes C.R."/>
            <person name="Machado J.A."/>
            <person name="Machado M.A."/>
            <person name="Madeira A.M.B.N."/>
            <person name="Madeira H.M.F."/>
            <person name="Marino C.L."/>
            <person name="Marques M.V."/>
            <person name="Martins E.A.L."/>
            <person name="Martins E.M.F."/>
            <person name="Matsukuma A.Y."/>
            <person name="Menck C.F.M."/>
            <person name="Miracca E.C."/>
            <person name="Miyaki C.Y."/>
            <person name="Monteiro-Vitorello C.B."/>
            <person name="Moon D.H."/>
            <person name="Nagai M.A."/>
            <person name="Nascimento A.L.T.O."/>
            <person name="Netto L.E.S."/>
            <person name="Nhani A. Jr."/>
            <person name="Nobrega F.G."/>
            <person name="Nunes L.R."/>
            <person name="Oliveira M.A."/>
            <person name="de Oliveira M.C."/>
            <person name="de Oliveira R.C."/>
            <person name="Palmieri D.A."/>
            <person name="Paris A."/>
            <person name="Peixoto B.R."/>
            <person name="Pereira G.A.G."/>
            <person name="Pereira H.A. Jr."/>
            <person name="Pesquero J.B."/>
            <person name="Quaggio R.B."/>
            <person name="Roberto P.G."/>
            <person name="Rodrigues V."/>
            <person name="de Rosa A.J.M."/>
            <person name="de Rosa V.E. Jr."/>
            <person name="de Sa R.G."/>
            <person name="Santelli R.V."/>
            <person name="Sawasaki H.E."/>
            <person name="da Silva A.C.R."/>
            <person name="da Silva A.M."/>
            <person name="da Silva F.R."/>
            <person name="Silva W.A. Jr."/>
            <person name="da Silveira J.F."/>
            <person name="Silvestri M.L.Z."/>
            <person name="Siqueira W.J."/>
            <person name="de Souza A.A."/>
            <person name="de Souza A.P."/>
            <person name="Terenzi M.F."/>
            <person name="Truffi D."/>
            <person name="Tsai S.M."/>
            <person name="Tsuhako M.H."/>
            <person name="Vallada H."/>
            <person name="Van Sluys M.A."/>
            <person name="Verjovski-Almeida S."/>
            <person name="Vettore A.L."/>
            <person name="Zago M.A."/>
            <person name="Zatz M."/>
            <person name="Meidanis J."/>
            <person name="Setubal J.C."/>
        </authorList>
    </citation>
    <scope>NUCLEOTIDE SEQUENCE [LARGE SCALE GENOMIC DNA]</scope>
    <source>
        <strain>9a5c</strain>
    </source>
</reference>
<evidence type="ECO:0000255" key="1">
    <source>
        <dbReference type="HAMAP-Rule" id="MF_00236"/>
    </source>
</evidence>
<evidence type="ECO:0000256" key="2">
    <source>
        <dbReference type="SAM" id="MobiDB-lite"/>
    </source>
</evidence>
<organism>
    <name type="scientific">Xylella fastidiosa (strain 9a5c)</name>
    <dbReference type="NCBI Taxonomy" id="160492"/>
    <lineage>
        <taxon>Bacteria</taxon>
        <taxon>Pseudomonadati</taxon>
        <taxon>Pseudomonadota</taxon>
        <taxon>Gammaproteobacteria</taxon>
        <taxon>Lysobacterales</taxon>
        <taxon>Lysobacteraceae</taxon>
        <taxon>Xylella</taxon>
    </lineage>
</organism>
<protein>
    <recommendedName>
        <fullName evidence="1">Sec-independent protein translocase protein TatA</fullName>
    </recommendedName>
</protein>
<feature type="chain" id="PRO_0000097968" description="Sec-independent protein translocase protein TatA">
    <location>
        <begin position="1"/>
        <end position="71"/>
    </location>
</feature>
<feature type="transmembrane region" description="Helical" evidence="1">
    <location>
        <begin position="1"/>
        <end position="21"/>
    </location>
</feature>
<feature type="region of interest" description="Disordered" evidence="2">
    <location>
        <begin position="43"/>
        <end position="71"/>
    </location>
</feature>
<feature type="compositionally biased region" description="Polar residues" evidence="2">
    <location>
        <begin position="52"/>
        <end position="65"/>
    </location>
</feature>
<gene>
    <name evidence="1" type="primary">tatA</name>
    <name type="ordered locus">XF_0564</name>
</gene>
<sequence>MGSFSLLHWLVVLVIVLLVFGTKRLANGAKDIGSAIKEFKKSLREDDKPTDQLGSTSQSTASGPQQDHGKH</sequence>